<comment type="function">
    <text evidence="2">Phospholipid scramblase involved in autophagy and cytoplasm to vacuole transport (Cvt) vesicle formation. Cycles between the preautophagosomal structure/phagophore assembly site (PAS) and the cytoplasmic vesicle pool and supplies membrane for the growing autophagosome. Lipid scramblase activity plays a key role in preautophagosomal structure/phagophore assembly by distributing the phospholipids that arrive through ATG2 from the cytoplasmic to the luminal leaflet of the bilayer, thereby driving autophagosomal membrane expansion. Required for mitophagy. Also involved in endoplasmic reticulum-specific autophagic process and is essential for the survival of cells subjected to severe ER stress. Different machineries are required for anterograde trafficking to the PAS during either the Cvt pathway or bulk autophagy and for retrograde trafficking.</text>
</comment>
<comment type="catalytic activity">
    <reaction evidence="2">
        <text>a 1,2-diacyl-sn-glycero-3-phosphocholine(in) = a 1,2-diacyl-sn-glycero-3-phosphocholine(out)</text>
        <dbReference type="Rhea" id="RHEA:38571"/>
        <dbReference type="ChEBI" id="CHEBI:57643"/>
    </reaction>
</comment>
<comment type="catalytic activity">
    <reaction evidence="2">
        <text>a 1,2-diacyl-sn-glycero-3-phospho-L-serine(in) = a 1,2-diacyl-sn-glycero-3-phospho-L-serine(out)</text>
        <dbReference type="Rhea" id="RHEA:38663"/>
        <dbReference type="ChEBI" id="CHEBI:57262"/>
    </reaction>
</comment>
<comment type="catalytic activity">
    <reaction evidence="2">
        <text>a 1,2-diacyl-sn-glycero-3-phosphoethanolamine(in) = a 1,2-diacyl-sn-glycero-3-phosphoethanolamine(out)</text>
        <dbReference type="Rhea" id="RHEA:38895"/>
        <dbReference type="ChEBI" id="CHEBI:64612"/>
    </reaction>
</comment>
<comment type="catalytic activity">
    <reaction evidence="2">
        <text>a 1,2-diacyl-sn-glycero-3-phospho-(1D-myo-inositol-3-phosphate)(in) = a 1,2-diacyl-sn-glycero-3-phospho-(1D-myo-inositol-3-phosphate)(out)</text>
        <dbReference type="Rhea" id="RHEA:67920"/>
        <dbReference type="ChEBI" id="CHEBI:58088"/>
    </reaction>
</comment>
<comment type="subunit">
    <text evidence="1">Homotrimer; forms a homotrimer with a central pore that forms a path between the two membrane leaflets.</text>
</comment>
<comment type="subcellular location">
    <subcellularLocation>
        <location evidence="2">Preautophagosomal structure membrane</location>
        <topology evidence="2">Multi-pass membrane protein</topology>
    </subcellularLocation>
    <subcellularLocation>
        <location evidence="2">Cytoplasmic vesicle membrane</location>
        <topology evidence="2">Multi-pass membrane protein</topology>
    </subcellularLocation>
    <subcellularLocation>
        <location evidence="2">Golgi apparatus membrane</location>
        <topology evidence="2">Multi-pass membrane protein</topology>
    </subcellularLocation>
    <subcellularLocation>
        <location evidence="2">Endoplasmic reticulum membrane</location>
        <topology evidence="2">Multi-pass membrane protein</topology>
    </subcellularLocation>
</comment>
<comment type="domain">
    <text evidence="1">Forms a homotrimer with a solvated central pore, which is connected laterally to the cytosol through the cavity within each protomer. Acts as a lipid scramblase that uses its central pore to function: the central pore opens laterally to accommodate lipid headgroups, thereby enabling lipid flipping and redistribution of lipids added to the outer leaflet of ATG9-containing vesicles, thereby enabling growth into autophagosomes.</text>
</comment>
<comment type="PTM">
    <text evidence="2">Phosphorylated by ATG1. ATG1 phosphorylation is required for preautophagosome elongation.</text>
</comment>
<comment type="similarity">
    <text evidence="5">Belongs to the ATG9 family.</text>
</comment>
<gene>
    <name type="primary">ATG9</name>
    <name type="ordered locus">KLLA0C16357g</name>
</gene>
<evidence type="ECO:0000250" key="1">
    <source>
        <dbReference type="UniProtKB" id="O74312"/>
    </source>
</evidence>
<evidence type="ECO:0000250" key="2">
    <source>
        <dbReference type="UniProtKB" id="Q12142"/>
    </source>
</evidence>
<evidence type="ECO:0000255" key="3"/>
<evidence type="ECO:0000256" key="4">
    <source>
        <dbReference type="SAM" id="MobiDB-lite"/>
    </source>
</evidence>
<evidence type="ECO:0000305" key="5"/>
<name>ATG9_KLULA</name>
<feature type="chain" id="PRO_0000119832" description="Autophagy-related protein 9">
    <location>
        <begin position="1"/>
        <end position="908"/>
    </location>
</feature>
<feature type="topological domain" description="Cytoplasmic" evidence="5">
    <location>
        <begin position="1"/>
        <end position="299"/>
    </location>
</feature>
<feature type="transmembrane region" description="Helical" evidence="3">
    <location>
        <begin position="300"/>
        <end position="320"/>
    </location>
</feature>
<feature type="topological domain" description="Lumenal" evidence="5">
    <location>
        <begin position="321"/>
        <end position="349"/>
    </location>
</feature>
<feature type="transmembrane region" description="Helical" evidence="3">
    <location>
        <begin position="350"/>
        <end position="370"/>
    </location>
</feature>
<feature type="topological domain" description="Cytoplasmic" evidence="5">
    <location>
        <begin position="371"/>
        <end position="507"/>
    </location>
</feature>
<feature type="intramembrane region" evidence="1">
    <location>
        <begin position="508"/>
        <end position="528"/>
    </location>
</feature>
<feature type="topological domain" description="Cytoplasmic" evidence="5">
    <location>
        <begin position="529"/>
        <end position="594"/>
    </location>
</feature>
<feature type="transmembrane region" description="Helical" evidence="3">
    <location>
        <begin position="595"/>
        <end position="615"/>
    </location>
</feature>
<feature type="topological domain" description="Lumenal" evidence="5">
    <location>
        <begin position="616"/>
        <end position="629"/>
    </location>
</feature>
<feature type="transmembrane region" description="Helical" evidence="3">
    <location>
        <begin position="630"/>
        <end position="650"/>
    </location>
</feature>
<feature type="topological domain" description="Cytoplasmic" evidence="5">
    <location>
        <begin position="651"/>
        <end position="696"/>
    </location>
</feature>
<feature type="intramembrane region" evidence="1">
    <location>
        <begin position="697"/>
        <end position="717"/>
    </location>
</feature>
<feature type="topological domain" description="Cytoplasmic" evidence="5">
    <location>
        <begin position="718"/>
        <end position="908"/>
    </location>
</feature>
<feature type="region of interest" description="Disordered" evidence="4">
    <location>
        <begin position="37"/>
        <end position="188"/>
    </location>
</feature>
<feature type="compositionally biased region" description="Acidic residues" evidence="4">
    <location>
        <begin position="103"/>
        <end position="124"/>
    </location>
</feature>
<feature type="compositionally biased region" description="Polar residues" evidence="4">
    <location>
        <begin position="126"/>
        <end position="139"/>
    </location>
</feature>
<feature type="compositionally biased region" description="Basic and acidic residues" evidence="4">
    <location>
        <begin position="146"/>
        <end position="156"/>
    </location>
</feature>
<feature type="compositionally biased region" description="Polar residues" evidence="4">
    <location>
        <begin position="176"/>
        <end position="187"/>
    </location>
</feature>
<proteinExistence type="inferred from homology"/>
<accession>Q6CT08</accession>
<dbReference type="EMBL" id="CR382123">
    <property type="protein sequence ID" value="CAH01782.1"/>
    <property type="molecule type" value="Genomic_DNA"/>
</dbReference>
<dbReference type="RefSeq" id="XP_452931.1">
    <property type="nucleotide sequence ID" value="XM_452931.1"/>
</dbReference>
<dbReference type="SMR" id="Q6CT08"/>
<dbReference type="FunCoup" id="Q6CT08">
    <property type="interactions" value="267"/>
</dbReference>
<dbReference type="STRING" id="284590.Q6CT08"/>
<dbReference type="PaxDb" id="284590-Q6CT08"/>
<dbReference type="KEGG" id="kla:KLLA0_C16357g"/>
<dbReference type="eggNOG" id="KOG2173">
    <property type="taxonomic scope" value="Eukaryota"/>
</dbReference>
<dbReference type="HOGENOM" id="CLU_006200_1_0_1"/>
<dbReference type="InParanoid" id="Q6CT08"/>
<dbReference type="OMA" id="IAEWKFR"/>
<dbReference type="Proteomes" id="UP000000598">
    <property type="component" value="Chromosome C"/>
</dbReference>
<dbReference type="GO" id="GO:0005776">
    <property type="term" value="C:autophagosome"/>
    <property type="evidence" value="ECO:0007669"/>
    <property type="project" value="TreeGrafter"/>
</dbReference>
<dbReference type="GO" id="GO:0030659">
    <property type="term" value="C:cytoplasmic vesicle membrane"/>
    <property type="evidence" value="ECO:0007669"/>
    <property type="project" value="UniProtKB-SubCell"/>
</dbReference>
<dbReference type="GO" id="GO:0005789">
    <property type="term" value="C:endoplasmic reticulum membrane"/>
    <property type="evidence" value="ECO:0007669"/>
    <property type="project" value="UniProtKB-SubCell"/>
</dbReference>
<dbReference type="GO" id="GO:0000139">
    <property type="term" value="C:Golgi membrane"/>
    <property type="evidence" value="ECO:0007669"/>
    <property type="project" value="UniProtKB-SubCell"/>
</dbReference>
<dbReference type="GO" id="GO:0034045">
    <property type="term" value="C:phagophore assembly site membrane"/>
    <property type="evidence" value="ECO:0007669"/>
    <property type="project" value="UniProtKB-SubCell"/>
</dbReference>
<dbReference type="GO" id="GO:0000422">
    <property type="term" value="P:autophagy of mitochondrion"/>
    <property type="evidence" value="ECO:0007669"/>
    <property type="project" value="TreeGrafter"/>
</dbReference>
<dbReference type="GO" id="GO:0006869">
    <property type="term" value="P:lipid transport"/>
    <property type="evidence" value="ECO:0007669"/>
    <property type="project" value="UniProtKB-KW"/>
</dbReference>
<dbReference type="GO" id="GO:0034727">
    <property type="term" value="P:piecemeal microautophagy of the nucleus"/>
    <property type="evidence" value="ECO:0007669"/>
    <property type="project" value="TreeGrafter"/>
</dbReference>
<dbReference type="GO" id="GO:0034497">
    <property type="term" value="P:protein localization to phagophore assembly site"/>
    <property type="evidence" value="ECO:0007669"/>
    <property type="project" value="TreeGrafter"/>
</dbReference>
<dbReference type="GO" id="GO:0061709">
    <property type="term" value="P:reticulophagy"/>
    <property type="evidence" value="ECO:0007669"/>
    <property type="project" value="TreeGrafter"/>
</dbReference>
<dbReference type="InterPro" id="IPR007241">
    <property type="entry name" value="Autophagy-rel_prot_9"/>
</dbReference>
<dbReference type="PANTHER" id="PTHR13038">
    <property type="entry name" value="APG9 AUTOPHAGY 9"/>
    <property type="match status" value="1"/>
</dbReference>
<dbReference type="PANTHER" id="PTHR13038:SF10">
    <property type="entry name" value="AUTOPHAGY-RELATED PROTEIN 9"/>
    <property type="match status" value="1"/>
</dbReference>
<dbReference type="Pfam" id="PF04109">
    <property type="entry name" value="ATG9"/>
    <property type="match status" value="1"/>
</dbReference>
<sequence length="908" mass="104039">MTDSQDKVNGGSKNTFLSRVFGVHSSAVENSLDAAEMSHITMPTEQDFSNYAEDEGNVRLIESDQEPSSSNEDSNDEEPLIQQPQSIRFDTASDGMATIQSESEPDEGGTEEDEVHLEEEDFSDQDLASSVSKYGQPSSSEDEEPLSNRDSNRGSDETIPFIGRQRLNLGGKNPITGATKSTKNPSESRVFERLLGNSPAKMFRNNGRPNNLEESFLFRKPSVAEQSGPGKSTHFNLKPPPIFNNISTLTSTSKNSLSSLSPKERALWKWANIENLDTFLQQVYEYYLGNGFYCIITEKVIHLATILFVVFISTYMGHCIDYSRLSSSHTFEEIHIEQCYKTQISPTAKVFLWIFYAFIGLKVLQLYFDVKALKDIRNFYNYLLSISDKDLQTIPWQSVIQQLVLLKDQNAITANATEVKAKNRLSAHDVANRIMRKENFVIALYDNNILDLSLPVPLLRTCALTKTLEWNINLCILGFAFNEKGYLKQAFLRESQREYLGEELKKRFVLAGFLNIILSPFLVTYFVLLNFFRYFNEYKTSPGSIGSRQYTPIAEWKFREYNELYHIFQKRMRLSMIIADNYVNQFPNTLLSLTLSFIQFVSGSFVAILGILTIFDPDNFLNFEITPDRTVLFYMTVFGTLWAVCHSSINDEYTVLKPEETLEELVSYTHYAPKEWKGKYHTEDIKNEFCRLYNLRITLLLRELVSIIITPFILWFSLPKNSERIIDFFRECTVYEEGLGYVCKYAMFEATKIDKGTKAKKQTKRMFSQAEQDDSETESDEGVNKMLQSYMYFVDDYKNAGNAVGKNQLPASPIEPSYHPYSSTKDYSWKTQFALGKNSNRKRNLNRSRVKRFPDRSSDLELGSLSGSLINKSTLFKDDIADNADELKAGNGVMGLLNQYYKKSDRNR</sequence>
<organism>
    <name type="scientific">Kluyveromyces lactis (strain ATCC 8585 / CBS 2359 / DSM 70799 / NBRC 1267 / NRRL Y-1140 / WM37)</name>
    <name type="common">Yeast</name>
    <name type="synonym">Candida sphaerica</name>
    <dbReference type="NCBI Taxonomy" id="284590"/>
    <lineage>
        <taxon>Eukaryota</taxon>
        <taxon>Fungi</taxon>
        <taxon>Dikarya</taxon>
        <taxon>Ascomycota</taxon>
        <taxon>Saccharomycotina</taxon>
        <taxon>Saccharomycetes</taxon>
        <taxon>Saccharomycetales</taxon>
        <taxon>Saccharomycetaceae</taxon>
        <taxon>Kluyveromyces</taxon>
    </lineage>
</organism>
<reference key="1">
    <citation type="journal article" date="2004" name="Nature">
        <title>Genome evolution in yeasts.</title>
        <authorList>
            <person name="Dujon B."/>
            <person name="Sherman D."/>
            <person name="Fischer G."/>
            <person name="Durrens P."/>
            <person name="Casaregola S."/>
            <person name="Lafontaine I."/>
            <person name="de Montigny J."/>
            <person name="Marck C."/>
            <person name="Neuveglise C."/>
            <person name="Talla E."/>
            <person name="Goffard N."/>
            <person name="Frangeul L."/>
            <person name="Aigle M."/>
            <person name="Anthouard V."/>
            <person name="Babour A."/>
            <person name="Barbe V."/>
            <person name="Barnay S."/>
            <person name="Blanchin S."/>
            <person name="Beckerich J.-M."/>
            <person name="Beyne E."/>
            <person name="Bleykasten C."/>
            <person name="Boisrame A."/>
            <person name="Boyer J."/>
            <person name="Cattolico L."/>
            <person name="Confanioleri F."/>
            <person name="de Daruvar A."/>
            <person name="Despons L."/>
            <person name="Fabre E."/>
            <person name="Fairhead C."/>
            <person name="Ferry-Dumazet H."/>
            <person name="Groppi A."/>
            <person name="Hantraye F."/>
            <person name="Hennequin C."/>
            <person name="Jauniaux N."/>
            <person name="Joyet P."/>
            <person name="Kachouri R."/>
            <person name="Kerrest A."/>
            <person name="Koszul R."/>
            <person name="Lemaire M."/>
            <person name="Lesur I."/>
            <person name="Ma L."/>
            <person name="Muller H."/>
            <person name="Nicaud J.-M."/>
            <person name="Nikolski M."/>
            <person name="Oztas S."/>
            <person name="Ozier-Kalogeropoulos O."/>
            <person name="Pellenz S."/>
            <person name="Potier S."/>
            <person name="Richard G.-F."/>
            <person name="Straub M.-L."/>
            <person name="Suleau A."/>
            <person name="Swennen D."/>
            <person name="Tekaia F."/>
            <person name="Wesolowski-Louvel M."/>
            <person name="Westhof E."/>
            <person name="Wirth B."/>
            <person name="Zeniou-Meyer M."/>
            <person name="Zivanovic Y."/>
            <person name="Bolotin-Fukuhara M."/>
            <person name="Thierry A."/>
            <person name="Bouchier C."/>
            <person name="Caudron B."/>
            <person name="Scarpelli C."/>
            <person name="Gaillardin C."/>
            <person name="Weissenbach J."/>
            <person name="Wincker P."/>
            <person name="Souciet J.-L."/>
        </authorList>
    </citation>
    <scope>NUCLEOTIDE SEQUENCE [LARGE SCALE GENOMIC DNA]</scope>
    <source>
        <strain>ATCC 8585 / CBS 2359 / DSM 70799 / NBRC 1267 / NRRL Y-1140 / WM37</strain>
    </source>
</reference>
<protein>
    <recommendedName>
        <fullName>Autophagy-related protein 9</fullName>
    </recommendedName>
</protein>
<keyword id="KW-0072">Autophagy</keyword>
<keyword id="KW-0968">Cytoplasmic vesicle</keyword>
<keyword id="KW-0256">Endoplasmic reticulum</keyword>
<keyword id="KW-0333">Golgi apparatus</keyword>
<keyword id="KW-0445">Lipid transport</keyword>
<keyword id="KW-0472">Membrane</keyword>
<keyword id="KW-0597">Phosphoprotein</keyword>
<keyword id="KW-1185">Reference proteome</keyword>
<keyword id="KW-0812">Transmembrane</keyword>
<keyword id="KW-1133">Transmembrane helix</keyword>
<keyword id="KW-0813">Transport</keyword>